<protein>
    <recommendedName>
        <fullName evidence="1">Dihydroorotate dehydrogenase (quinone)</fullName>
        <ecNumber evidence="1">1.3.5.2</ecNumber>
    </recommendedName>
    <alternativeName>
        <fullName evidence="1">DHOdehase</fullName>
        <shortName evidence="1">DHOD</shortName>
        <shortName evidence="1">DHODase</shortName>
    </alternativeName>
    <alternativeName>
        <fullName evidence="1">Dihydroorotate oxidase</fullName>
    </alternativeName>
</protein>
<feature type="chain" id="PRO_1000024205" description="Dihydroorotate dehydrogenase (quinone)">
    <location>
        <begin position="1"/>
        <end position="343"/>
    </location>
</feature>
<feature type="active site" description="Nucleophile" evidence="1">
    <location>
        <position position="174"/>
    </location>
</feature>
<feature type="binding site" evidence="1">
    <location>
        <begin position="61"/>
        <end position="65"/>
    </location>
    <ligand>
        <name>FMN</name>
        <dbReference type="ChEBI" id="CHEBI:58210"/>
    </ligand>
</feature>
<feature type="binding site" evidence="1">
    <location>
        <position position="65"/>
    </location>
    <ligand>
        <name>substrate</name>
    </ligand>
</feature>
<feature type="binding site" evidence="1">
    <location>
        <position position="85"/>
    </location>
    <ligand>
        <name>FMN</name>
        <dbReference type="ChEBI" id="CHEBI:58210"/>
    </ligand>
</feature>
<feature type="binding site" evidence="1">
    <location>
        <begin position="110"/>
        <end position="114"/>
    </location>
    <ligand>
        <name>substrate</name>
    </ligand>
</feature>
<feature type="binding site" evidence="1">
    <location>
        <position position="138"/>
    </location>
    <ligand>
        <name>FMN</name>
        <dbReference type="ChEBI" id="CHEBI:58210"/>
    </ligand>
</feature>
<feature type="binding site" evidence="1">
    <location>
        <position position="171"/>
    </location>
    <ligand>
        <name>FMN</name>
        <dbReference type="ChEBI" id="CHEBI:58210"/>
    </ligand>
</feature>
<feature type="binding site" evidence="1">
    <location>
        <position position="171"/>
    </location>
    <ligand>
        <name>substrate</name>
    </ligand>
</feature>
<feature type="binding site" evidence="1">
    <location>
        <position position="176"/>
    </location>
    <ligand>
        <name>substrate</name>
    </ligand>
</feature>
<feature type="binding site" evidence="1">
    <location>
        <position position="216"/>
    </location>
    <ligand>
        <name>FMN</name>
        <dbReference type="ChEBI" id="CHEBI:58210"/>
    </ligand>
</feature>
<feature type="binding site" evidence="1">
    <location>
        <position position="244"/>
    </location>
    <ligand>
        <name>FMN</name>
        <dbReference type="ChEBI" id="CHEBI:58210"/>
    </ligand>
</feature>
<feature type="binding site" evidence="1">
    <location>
        <begin position="245"/>
        <end position="246"/>
    </location>
    <ligand>
        <name>substrate</name>
    </ligand>
</feature>
<feature type="binding site" evidence="1">
    <location>
        <position position="267"/>
    </location>
    <ligand>
        <name>FMN</name>
        <dbReference type="ChEBI" id="CHEBI:58210"/>
    </ligand>
</feature>
<feature type="binding site" evidence="1">
    <location>
        <position position="296"/>
    </location>
    <ligand>
        <name>FMN</name>
        <dbReference type="ChEBI" id="CHEBI:58210"/>
    </ligand>
</feature>
<feature type="binding site" evidence="1">
    <location>
        <begin position="317"/>
        <end position="318"/>
    </location>
    <ligand>
        <name>FMN</name>
        <dbReference type="ChEBI" id="CHEBI:58210"/>
    </ligand>
</feature>
<reference key="1">
    <citation type="journal article" date="2005" name="Proc. Natl. Acad. Sci. U.S.A.">
        <title>Comparison of the complete genome sequences of Pseudomonas syringae pv. syringae B728a and pv. tomato DC3000.</title>
        <authorList>
            <person name="Feil H."/>
            <person name="Feil W.S."/>
            <person name="Chain P."/>
            <person name="Larimer F."/>
            <person name="Dibartolo G."/>
            <person name="Copeland A."/>
            <person name="Lykidis A."/>
            <person name="Trong S."/>
            <person name="Nolan M."/>
            <person name="Goltsman E."/>
            <person name="Thiel J."/>
            <person name="Malfatti S."/>
            <person name="Loper J.E."/>
            <person name="Lapidus A."/>
            <person name="Detter J.C."/>
            <person name="Land M."/>
            <person name="Richardson P.M."/>
            <person name="Kyrpides N.C."/>
            <person name="Ivanova N."/>
            <person name="Lindow S.E."/>
        </authorList>
    </citation>
    <scope>NUCLEOTIDE SEQUENCE [LARGE SCALE GENOMIC DNA]</scope>
    <source>
        <strain>B728a</strain>
    </source>
</reference>
<name>PYRD_PSEU2</name>
<accession>Q4ZUM3</accession>
<sequence length="343" mass="36207">MYNLARQLLFKLSPETSHDLSLDLIGAGGRLGLNGLLSKSPAKLPVSVMGLEFPNPVGLAAGLDKNGAAIDGFAQLGFGFVEIGTVTPRAQPGNPKPRIFRLPNAEAIINRMGFNNLGVDNLVSRVEAAKYRGVLGINIGKNFDTPVERAVDDYLICLDKVYAHASYVTVNVSSPNTPGLRSLQFGDSLKQLLQALSLRQQELTQRHGRRVPLAIKIAPDMTDEETVLVAAALIESGMDAVIATNTTLSRQGVEGLPHADQAGGLSGAPVREKSTHIVKVLAGELAGRLPIIAAGGITEGRHAAEKIAAGASLVQIYSGFIYKGPALIRESVDAIAAMPRAAR</sequence>
<keyword id="KW-1003">Cell membrane</keyword>
<keyword id="KW-0285">Flavoprotein</keyword>
<keyword id="KW-0288">FMN</keyword>
<keyword id="KW-0472">Membrane</keyword>
<keyword id="KW-0560">Oxidoreductase</keyword>
<keyword id="KW-0665">Pyrimidine biosynthesis</keyword>
<dbReference type="EC" id="1.3.5.2" evidence="1"/>
<dbReference type="EMBL" id="CP000075">
    <property type="protein sequence ID" value="AAY37149.1"/>
    <property type="molecule type" value="Genomic_DNA"/>
</dbReference>
<dbReference type="RefSeq" id="WP_003406732.1">
    <property type="nucleotide sequence ID" value="NC_007005.1"/>
</dbReference>
<dbReference type="RefSeq" id="YP_235187.1">
    <property type="nucleotide sequence ID" value="NC_007005.1"/>
</dbReference>
<dbReference type="SMR" id="Q4ZUM3"/>
<dbReference type="STRING" id="205918.Psyr_2106"/>
<dbReference type="KEGG" id="psb:Psyr_2106"/>
<dbReference type="PATRIC" id="fig|205918.7.peg.2152"/>
<dbReference type="eggNOG" id="COG0167">
    <property type="taxonomic scope" value="Bacteria"/>
</dbReference>
<dbReference type="HOGENOM" id="CLU_013640_2_0_6"/>
<dbReference type="OrthoDB" id="9802377at2"/>
<dbReference type="UniPathway" id="UPA00070">
    <property type="reaction ID" value="UER00946"/>
</dbReference>
<dbReference type="Proteomes" id="UP000000426">
    <property type="component" value="Chromosome"/>
</dbReference>
<dbReference type="GO" id="GO:0005737">
    <property type="term" value="C:cytoplasm"/>
    <property type="evidence" value="ECO:0007669"/>
    <property type="project" value="InterPro"/>
</dbReference>
<dbReference type="GO" id="GO:0005886">
    <property type="term" value="C:plasma membrane"/>
    <property type="evidence" value="ECO:0007669"/>
    <property type="project" value="UniProtKB-SubCell"/>
</dbReference>
<dbReference type="GO" id="GO:0106430">
    <property type="term" value="F:dihydroorotate dehydrogenase (quinone) activity"/>
    <property type="evidence" value="ECO:0007669"/>
    <property type="project" value="UniProtKB-EC"/>
</dbReference>
<dbReference type="GO" id="GO:0006207">
    <property type="term" value="P:'de novo' pyrimidine nucleobase biosynthetic process"/>
    <property type="evidence" value="ECO:0007669"/>
    <property type="project" value="InterPro"/>
</dbReference>
<dbReference type="GO" id="GO:0044205">
    <property type="term" value="P:'de novo' UMP biosynthetic process"/>
    <property type="evidence" value="ECO:0007669"/>
    <property type="project" value="UniProtKB-UniRule"/>
</dbReference>
<dbReference type="CDD" id="cd04738">
    <property type="entry name" value="DHOD_2_like"/>
    <property type="match status" value="1"/>
</dbReference>
<dbReference type="FunFam" id="3.20.20.70:FF:000028">
    <property type="entry name" value="Dihydroorotate dehydrogenase (quinone)"/>
    <property type="match status" value="1"/>
</dbReference>
<dbReference type="Gene3D" id="3.20.20.70">
    <property type="entry name" value="Aldolase class I"/>
    <property type="match status" value="1"/>
</dbReference>
<dbReference type="HAMAP" id="MF_00225">
    <property type="entry name" value="DHO_dh_type2"/>
    <property type="match status" value="1"/>
</dbReference>
<dbReference type="InterPro" id="IPR013785">
    <property type="entry name" value="Aldolase_TIM"/>
</dbReference>
<dbReference type="InterPro" id="IPR050074">
    <property type="entry name" value="DHO_dehydrogenase"/>
</dbReference>
<dbReference type="InterPro" id="IPR012135">
    <property type="entry name" value="Dihydroorotate_DH_1_2"/>
</dbReference>
<dbReference type="InterPro" id="IPR005719">
    <property type="entry name" value="Dihydroorotate_DH_2"/>
</dbReference>
<dbReference type="InterPro" id="IPR005720">
    <property type="entry name" value="Dihydroorotate_DH_cat"/>
</dbReference>
<dbReference type="InterPro" id="IPR001295">
    <property type="entry name" value="Dihydroorotate_DH_CS"/>
</dbReference>
<dbReference type="NCBIfam" id="NF003644">
    <property type="entry name" value="PRK05286.1-1"/>
    <property type="match status" value="1"/>
</dbReference>
<dbReference type="NCBIfam" id="NF003645">
    <property type="entry name" value="PRK05286.1-2"/>
    <property type="match status" value="1"/>
</dbReference>
<dbReference type="NCBIfam" id="NF003646">
    <property type="entry name" value="PRK05286.1-4"/>
    <property type="match status" value="1"/>
</dbReference>
<dbReference type="NCBIfam" id="NF003652">
    <property type="entry name" value="PRK05286.2-5"/>
    <property type="match status" value="1"/>
</dbReference>
<dbReference type="NCBIfam" id="TIGR01036">
    <property type="entry name" value="pyrD_sub2"/>
    <property type="match status" value="1"/>
</dbReference>
<dbReference type="PANTHER" id="PTHR48109:SF4">
    <property type="entry name" value="DIHYDROOROTATE DEHYDROGENASE (QUINONE), MITOCHONDRIAL"/>
    <property type="match status" value="1"/>
</dbReference>
<dbReference type="PANTHER" id="PTHR48109">
    <property type="entry name" value="DIHYDROOROTATE DEHYDROGENASE (QUINONE), MITOCHONDRIAL-RELATED"/>
    <property type="match status" value="1"/>
</dbReference>
<dbReference type="Pfam" id="PF01180">
    <property type="entry name" value="DHO_dh"/>
    <property type="match status" value="1"/>
</dbReference>
<dbReference type="PIRSF" id="PIRSF000164">
    <property type="entry name" value="DHO_oxidase"/>
    <property type="match status" value="1"/>
</dbReference>
<dbReference type="SUPFAM" id="SSF51395">
    <property type="entry name" value="FMN-linked oxidoreductases"/>
    <property type="match status" value="1"/>
</dbReference>
<dbReference type="PROSITE" id="PS00911">
    <property type="entry name" value="DHODEHASE_1"/>
    <property type="match status" value="1"/>
</dbReference>
<gene>
    <name evidence="1" type="primary">pyrD</name>
    <name type="ordered locus">Psyr_2106</name>
</gene>
<proteinExistence type="inferred from homology"/>
<comment type="function">
    <text evidence="1">Catalyzes the conversion of dihydroorotate to orotate with quinone as electron acceptor.</text>
</comment>
<comment type="catalytic activity">
    <reaction evidence="1">
        <text>(S)-dihydroorotate + a quinone = orotate + a quinol</text>
        <dbReference type="Rhea" id="RHEA:30187"/>
        <dbReference type="ChEBI" id="CHEBI:24646"/>
        <dbReference type="ChEBI" id="CHEBI:30839"/>
        <dbReference type="ChEBI" id="CHEBI:30864"/>
        <dbReference type="ChEBI" id="CHEBI:132124"/>
        <dbReference type="EC" id="1.3.5.2"/>
    </reaction>
</comment>
<comment type="cofactor">
    <cofactor evidence="1">
        <name>FMN</name>
        <dbReference type="ChEBI" id="CHEBI:58210"/>
    </cofactor>
    <text evidence="1">Binds 1 FMN per subunit.</text>
</comment>
<comment type="pathway">
    <text evidence="1">Pyrimidine metabolism; UMP biosynthesis via de novo pathway; orotate from (S)-dihydroorotate (quinone route): step 1/1.</text>
</comment>
<comment type="subunit">
    <text evidence="1">Monomer.</text>
</comment>
<comment type="subcellular location">
    <subcellularLocation>
        <location evidence="1">Cell membrane</location>
        <topology evidence="1">Peripheral membrane protein</topology>
    </subcellularLocation>
</comment>
<comment type="similarity">
    <text evidence="1">Belongs to the dihydroorotate dehydrogenase family. Type 2 subfamily.</text>
</comment>
<organism>
    <name type="scientific">Pseudomonas syringae pv. syringae (strain B728a)</name>
    <dbReference type="NCBI Taxonomy" id="205918"/>
    <lineage>
        <taxon>Bacteria</taxon>
        <taxon>Pseudomonadati</taxon>
        <taxon>Pseudomonadota</taxon>
        <taxon>Gammaproteobacteria</taxon>
        <taxon>Pseudomonadales</taxon>
        <taxon>Pseudomonadaceae</taxon>
        <taxon>Pseudomonas</taxon>
        <taxon>Pseudomonas syringae</taxon>
    </lineage>
</organism>
<evidence type="ECO:0000255" key="1">
    <source>
        <dbReference type="HAMAP-Rule" id="MF_00225"/>
    </source>
</evidence>